<organism>
    <name type="scientific">Leptospira borgpetersenii serovar Hardjo-bovis (strain JB197)</name>
    <dbReference type="NCBI Taxonomy" id="355277"/>
    <lineage>
        <taxon>Bacteria</taxon>
        <taxon>Pseudomonadati</taxon>
        <taxon>Spirochaetota</taxon>
        <taxon>Spirochaetia</taxon>
        <taxon>Leptospirales</taxon>
        <taxon>Leptospiraceae</taxon>
        <taxon>Leptospira</taxon>
    </lineage>
</organism>
<dbReference type="EC" id="3.5.1.88" evidence="1"/>
<dbReference type="EMBL" id="CP000350">
    <property type="protein sequence ID" value="ABJ76356.1"/>
    <property type="molecule type" value="Genomic_DNA"/>
</dbReference>
<dbReference type="RefSeq" id="WP_011670138.1">
    <property type="nucleotide sequence ID" value="NC_008510.1"/>
</dbReference>
<dbReference type="SMR" id="Q04RW4"/>
<dbReference type="KEGG" id="lbj:LBJ_1823"/>
<dbReference type="HOGENOM" id="CLU_061901_5_2_12"/>
<dbReference type="Proteomes" id="UP000000656">
    <property type="component" value="Chromosome 1"/>
</dbReference>
<dbReference type="GO" id="GO:0046872">
    <property type="term" value="F:metal ion binding"/>
    <property type="evidence" value="ECO:0007669"/>
    <property type="project" value="UniProtKB-KW"/>
</dbReference>
<dbReference type="GO" id="GO:0042586">
    <property type="term" value="F:peptide deformylase activity"/>
    <property type="evidence" value="ECO:0007669"/>
    <property type="project" value="UniProtKB-UniRule"/>
</dbReference>
<dbReference type="GO" id="GO:0043686">
    <property type="term" value="P:co-translational protein modification"/>
    <property type="evidence" value="ECO:0007669"/>
    <property type="project" value="TreeGrafter"/>
</dbReference>
<dbReference type="GO" id="GO:0006412">
    <property type="term" value="P:translation"/>
    <property type="evidence" value="ECO:0007669"/>
    <property type="project" value="UniProtKB-UniRule"/>
</dbReference>
<dbReference type="CDD" id="cd00487">
    <property type="entry name" value="Pep_deformylase"/>
    <property type="match status" value="1"/>
</dbReference>
<dbReference type="FunFam" id="3.90.45.10:FF:000003">
    <property type="entry name" value="Peptide deformylase"/>
    <property type="match status" value="1"/>
</dbReference>
<dbReference type="Gene3D" id="3.90.45.10">
    <property type="entry name" value="Peptide deformylase"/>
    <property type="match status" value="1"/>
</dbReference>
<dbReference type="HAMAP" id="MF_00163">
    <property type="entry name" value="Pep_deformylase"/>
    <property type="match status" value="1"/>
</dbReference>
<dbReference type="InterPro" id="IPR023635">
    <property type="entry name" value="Peptide_deformylase"/>
</dbReference>
<dbReference type="InterPro" id="IPR036821">
    <property type="entry name" value="Peptide_deformylase_sf"/>
</dbReference>
<dbReference type="NCBIfam" id="TIGR00079">
    <property type="entry name" value="pept_deformyl"/>
    <property type="match status" value="1"/>
</dbReference>
<dbReference type="NCBIfam" id="NF001159">
    <property type="entry name" value="PRK00150.1-3"/>
    <property type="match status" value="1"/>
</dbReference>
<dbReference type="PANTHER" id="PTHR10458">
    <property type="entry name" value="PEPTIDE DEFORMYLASE"/>
    <property type="match status" value="1"/>
</dbReference>
<dbReference type="PANTHER" id="PTHR10458:SF20">
    <property type="entry name" value="PEPTIDE DEFORMYLASE 1"/>
    <property type="match status" value="1"/>
</dbReference>
<dbReference type="Pfam" id="PF01327">
    <property type="entry name" value="Pep_deformylase"/>
    <property type="match status" value="1"/>
</dbReference>
<dbReference type="PIRSF" id="PIRSF004749">
    <property type="entry name" value="Pep_def"/>
    <property type="match status" value="1"/>
</dbReference>
<dbReference type="PRINTS" id="PR01576">
    <property type="entry name" value="PDEFORMYLASE"/>
</dbReference>
<dbReference type="SUPFAM" id="SSF56420">
    <property type="entry name" value="Peptide deformylase"/>
    <property type="match status" value="1"/>
</dbReference>
<evidence type="ECO:0000255" key="1">
    <source>
        <dbReference type="HAMAP-Rule" id="MF_00163"/>
    </source>
</evidence>
<comment type="function">
    <text evidence="1">Removes the formyl group from the N-terminal Met of newly synthesized proteins. Requires at least a dipeptide for an efficient rate of reaction. N-terminal L-methionine is a prerequisite for activity but the enzyme has broad specificity at other positions.</text>
</comment>
<comment type="catalytic activity">
    <reaction evidence="1">
        <text>N-terminal N-formyl-L-methionyl-[peptide] + H2O = N-terminal L-methionyl-[peptide] + formate</text>
        <dbReference type="Rhea" id="RHEA:24420"/>
        <dbReference type="Rhea" id="RHEA-COMP:10639"/>
        <dbReference type="Rhea" id="RHEA-COMP:10640"/>
        <dbReference type="ChEBI" id="CHEBI:15377"/>
        <dbReference type="ChEBI" id="CHEBI:15740"/>
        <dbReference type="ChEBI" id="CHEBI:49298"/>
        <dbReference type="ChEBI" id="CHEBI:64731"/>
        <dbReference type="EC" id="3.5.1.88"/>
    </reaction>
</comment>
<comment type="cofactor">
    <cofactor evidence="1">
        <name>Fe(2+)</name>
        <dbReference type="ChEBI" id="CHEBI:29033"/>
    </cofactor>
    <text evidence="1">Binds 1 Fe(2+) ion.</text>
</comment>
<comment type="similarity">
    <text evidence="1">Belongs to the polypeptide deformylase family.</text>
</comment>
<name>DEF_LEPBJ</name>
<keyword id="KW-0378">Hydrolase</keyword>
<keyword id="KW-0408">Iron</keyword>
<keyword id="KW-0479">Metal-binding</keyword>
<keyword id="KW-0648">Protein biosynthesis</keyword>
<feature type="chain" id="PRO_0000301050" description="Peptide deformylase">
    <location>
        <begin position="1"/>
        <end position="178"/>
    </location>
</feature>
<feature type="active site" evidence="1">
    <location>
        <position position="145"/>
    </location>
</feature>
<feature type="binding site" evidence="1">
    <location>
        <position position="102"/>
    </location>
    <ligand>
        <name>Fe cation</name>
        <dbReference type="ChEBI" id="CHEBI:24875"/>
    </ligand>
</feature>
<feature type="binding site" evidence="1">
    <location>
        <position position="144"/>
    </location>
    <ligand>
        <name>Fe cation</name>
        <dbReference type="ChEBI" id="CHEBI:24875"/>
    </ligand>
</feature>
<feature type="binding site" evidence="1">
    <location>
        <position position="148"/>
    </location>
    <ligand>
        <name>Fe cation</name>
        <dbReference type="ChEBI" id="CHEBI:24875"/>
    </ligand>
</feature>
<sequence>MSVRKILRMGDSILRQVSIPVTENELQTKEFKKLIRDMFDTMRHAEGVGLAAPQIGILKQIVVVGSEDNERYPDTPNVPERVILNPIITPLTKDTSGFWEGCLSVPGMRGYVERPNKIRMQWMDEKGDRFDETIDGYKAVVYQHECDHLSGILYVDRLKDTKLFGFNDTLDSGRNVLD</sequence>
<protein>
    <recommendedName>
        <fullName evidence="1">Peptide deformylase</fullName>
        <shortName evidence="1">PDF</shortName>
        <ecNumber evidence="1">3.5.1.88</ecNumber>
    </recommendedName>
    <alternativeName>
        <fullName evidence="1">Polypeptide deformylase</fullName>
    </alternativeName>
</protein>
<proteinExistence type="inferred from homology"/>
<reference key="1">
    <citation type="journal article" date="2006" name="Proc. Natl. Acad. Sci. U.S.A.">
        <title>Genome reduction in Leptospira borgpetersenii reflects limited transmission potential.</title>
        <authorList>
            <person name="Bulach D.M."/>
            <person name="Zuerner R.L."/>
            <person name="Wilson P."/>
            <person name="Seemann T."/>
            <person name="McGrath A."/>
            <person name="Cullen P.A."/>
            <person name="Davis J."/>
            <person name="Johnson M."/>
            <person name="Kuczek E."/>
            <person name="Alt D.P."/>
            <person name="Peterson-Burch B."/>
            <person name="Coppel R.L."/>
            <person name="Rood J.I."/>
            <person name="Davies J.K."/>
            <person name="Adler B."/>
        </authorList>
    </citation>
    <scope>NUCLEOTIDE SEQUENCE [LARGE SCALE GENOMIC DNA]</scope>
    <source>
        <strain>JB197</strain>
    </source>
</reference>
<gene>
    <name evidence="1" type="primary">def</name>
    <name type="ordered locus">LBJ_1823</name>
</gene>
<accession>Q04RW4</accession>